<keyword id="KW-0627">Porphyrin biosynthesis</keyword>
<keyword id="KW-0808">Transferase</keyword>
<feature type="chain" id="PRO_0000143033" description="Probable porphobilinogen deaminase">
    <location>
        <begin position="1"/>
        <end position="297"/>
    </location>
</feature>
<feature type="modified residue" description="S-(dipyrrolylmethanemethyl)cysteine" evidence="1">
    <location>
        <position position="233"/>
    </location>
</feature>
<name>HEM3_THEVO</name>
<protein>
    <recommendedName>
        <fullName evidence="1">Probable porphobilinogen deaminase</fullName>
        <shortName evidence="1">PBG</shortName>
        <ecNumber evidence="1">2.5.1.61</ecNumber>
    </recommendedName>
    <alternativeName>
        <fullName evidence="1">Hydroxymethylbilane synthase</fullName>
        <shortName evidence="1">HMBS</shortName>
    </alternativeName>
    <alternativeName>
        <fullName evidence="1">Pre-uroporphyrinogen synthase</fullName>
    </alternativeName>
</protein>
<proteinExistence type="inferred from homology"/>
<sequence length="297" mass="32892">MKIKIGTRPSNLAVAQANMVASSLEAIGIDTEIVKHRSAGDIDTKNPIYSIGKTGVFVQDLNNMILRGEIDVAVHSAKDIPSEIENRLTIAATLKRGSFNDALVSKYDLRSLPISAKVGTSSIRRIFQLKYARQDLKFENIRGNIETRIAKMSELGLDAIVMAEAAIQRLGLNVEYSKLDENKFVPAPNQGIIAVVSKKEGTVRKILEEINDENTFEEMQIERSVVQQLKLGCSTPVGILSRPSGKGHKIIAQFFSMQGDDVSVFEQYLNDLSDVDSLVSYIRENIPREYGYIASEE</sequence>
<dbReference type="EC" id="2.5.1.61" evidence="1"/>
<dbReference type="EMBL" id="BA000011">
    <property type="protein sequence ID" value="BAB59775.1"/>
    <property type="molecule type" value="Genomic_DNA"/>
</dbReference>
<dbReference type="RefSeq" id="WP_010916892.1">
    <property type="nucleotide sequence ID" value="NC_002689.2"/>
</dbReference>
<dbReference type="SMR" id="Q97B26"/>
<dbReference type="STRING" id="273116.gene:9381421"/>
<dbReference type="PaxDb" id="273116-14324849"/>
<dbReference type="GeneID" id="1441740"/>
<dbReference type="KEGG" id="tvo:TVG0625731"/>
<dbReference type="eggNOG" id="arCOG04299">
    <property type="taxonomic scope" value="Archaea"/>
</dbReference>
<dbReference type="HOGENOM" id="CLU_019704_1_0_2"/>
<dbReference type="OrthoDB" id="8042at2157"/>
<dbReference type="PhylomeDB" id="Q97B26"/>
<dbReference type="UniPathway" id="UPA00251">
    <property type="reaction ID" value="UER00319"/>
</dbReference>
<dbReference type="Proteomes" id="UP000001017">
    <property type="component" value="Chromosome"/>
</dbReference>
<dbReference type="GO" id="GO:0005737">
    <property type="term" value="C:cytoplasm"/>
    <property type="evidence" value="ECO:0007669"/>
    <property type="project" value="TreeGrafter"/>
</dbReference>
<dbReference type="GO" id="GO:0004418">
    <property type="term" value="F:hydroxymethylbilane synthase activity"/>
    <property type="evidence" value="ECO:0007669"/>
    <property type="project" value="UniProtKB-UniRule"/>
</dbReference>
<dbReference type="GO" id="GO:0006782">
    <property type="term" value="P:protoporphyrinogen IX biosynthetic process"/>
    <property type="evidence" value="ECO:0007669"/>
    <property type="project" value="UniProtKB-UniRule"/>
</dbReference>
<dbReference type="FunFam" id="3.40.190.10:FF:000005">
    <property type="entry name" value="Porphobilinogen deaminase"/>
    <property type="match status" value="1"/>
</dbReference>
<dbReference type="Gene3D" id="3.40.190.10">
    <property type="entry name" value="Periplasmic binding protein-like II"/>
    <property type="match status" value="2"/>
</dbReference>
<dbReference type="Gene3D" id="3.30.160.40">
    <property type="entry name" value="Porphobilinogen deaminase, C-terminal domain"/>
    <property type="match status" value="1"/>
</dbReference>
<dbReference type="HAMAP" id="MF_00260">
    <property type="entry name" value="Porphobil_deam"/>
    <property type="match status" value="1"/>
</dbReference>
<dbReference type="InterPro" id="IPR000860">
    <property type="entry name" value="HemC"/>
</dbReference>
<dbReference type="InterPro" id="IPR022419">
    <property type="entry name" value="Porphobilin_deaminase_cofac_BS"/>
</dbReference>
<dbReference type="InterPro" id="IPR022417">
    <property type="entry name" value="Porphobilin_deaminase_N"/>
</dbReference>
<dbReference type="InterPro" id="IPR036803">
    <property type="entry name" value="Porphobilinogen_deaminase_C_sf"/>
</dbReference>
<dbReference type="NCBIfam" id="TIGR00212">
    <property type="entry name" value="hemC"/>
    <property type="match status" value="1"/>
</dbReference>
<dbReference type="PANTHER" id="PTHR11557">
    <property type="entry name" value="PORPHOBILINOGEN DEAMINASE"/>
    <property type="match status" value="1"/>
</dbReference>
<dbReference type="PANTHER" id="PTHR11557:SF0">
    <property type="entry name" value="PORPHOBILINOGEN DEAMINASE"/>
    <property type="match status" value="1"/>
</dbReference>
<dbReference type="Pfam" id="PF01379">
    <property type="entry name" value="Porphobil_deam"/>
    <property type="match status" value="1"/>
</dbReference>
<dbReference type="PIRSF" id="PIRSF001438">
    <property type="entry name" value="4pyrrol_synth_OHMeBilane_synth"/>
    <property type="match status" value="1"/>
</dbReference>
<dbReference type="PRINTS" id="PR00151">
    <property type="entry name" value="PORPHBDMNASE"/>
</dbReference>
<dbReference type="SUPFAM" id="SSF53850">
    <property type="entry name" value="Periplasmic binding protein-like II"/>
    <property type="match status" value="1"/>
</dbReference>
<dbReference type="SUPFAM" id="SSF54782">
    <property type="entry name" value="Porphobilinogen deaminase (hydroxymethylbilane synthase), C-terminal domain"/>
    <property type="match status" value="1"/>
</dbReference>
<dbReference type="PROSITE" id="PS00533">
    <property type="entry name" value="PORPHOBILINOGEN_DEAM"/>
    <property type="match status" value="1"/>
</dbReference>
<reference key="1">
    <citation type="journal article" date="2000" name="Proc. Natl. Acad. Sci. U.S.A.">
        <title>Archaeal adaptation to higher temperatures revealed by genomic sequence of Thermoplasma volcanium.</title>
        <authorList>
            <person name="Kawashima T."/>
            <person name="Amano N."/>
            <person name="Koike H."/>
            <person name="Makino S."/>
            <person name="Higuchi S."/>
            <person name="Kawashima-Ohya Y."/>
            <person name="Watanabe K."/>
            <person name="Yamazaki M."/>
            <person name="Kanehori K."/>
            <person name="Kawamoto T."/>
            <person name="Nunoshiba T."/>
            <person name="Yamamoto Y."/>
            <person name="Aramaki H."/>
            <person name="Makino K."/>
            <person name="Suzuki M."/>
        </authorList>
    </citation>
    <scope>NUCLEOTIDE SEQUENCE [LARGE SCALE GENOMIC DNA]</scope>
    <source>
        <strain>ATCC 51530 / DSM 4299 / JCM 9571 / NBRC 15438 / GSS1</strain>
    </source>
</reference>
<evidence type="ECO:0000255" key="1">
    <source>
        <dbReference type="HAMAP-Rule" id="MF_00260"/>
    </source>
</evidence>
<gene>
    <name evidence="1" type="primary">hemC</name>
    <name type="ordered locus">TV0633</name>
    <name type="ORF">TVG0625731</name>
</gene>
<comment type="function">
    <text evidence="1">Tetrapolymerization of the monopyrrole PBG into the hydroxymethylbilane pre-uroporphyrinogen in several discrete steps.</text>
</comment>
<comment type="catalytic activity">
    <reaction evidence="1">
        <text>4 porphobilinogen + H2O = hydroxymethylbilane + 4 NH4(+)</text>
        <dbReference type="Rhea" id="RHEA:13185"/>
        <dbReference type="ChEBI" id="CHEBI:15377"/>
        <dbReference type="ChEBI" id="CHEBI:28938"/>
        <dbReference type="ChEBI" id="CHEBI:57845"/>
        <dbReference type="ChEBI" id="CHEBI:58126"/>
        <dbReference type="EC" id="2.5.1.61"/>
    </reaction>
</comment>
<comment type="cofactor">
    <cofactor evidence="1">
        <name>dipyrromethane</name>
        <dbReference type="ChEBI" id="CHEBI:60342"/>
    </cofactor>
    <text evidence="1">Binds 1 dipyrromethane group covalently.</text>
</comment>
<comment type="pathway">
    <text evidence="1">Porphyrin-containing compound metabolism; protoporphyrin-IX biosynthesis; coproporphyrinogen-III from 5-aminolevulinate: step 2/4.</text>
</comment>
<comment type="miscellaneous">
    <text evidence="1">The porphobilinogen subunits are added to the dipyrromethane group.</text>
</comment>
<comment type="similarity">
    <text evidence="1">Belongs to the HMBS family.</text>
</comment>
<accession>Q97B26</accession>
<organism>
    <name type="scientific">Thermoplasma volcanium (strain ATCC 51530 / DSM 4299 / JCM 9571 / NBRC 15438 / GSS1)</name>
    <dbReference type="NCBI Taxonomy" id="273116"/>
    <lineage>
        <taxon>Archaea</taxon>
        <taxon>Methanobacteriati</taxon>
        <taxon>Thermoplasmatota</taxon>
        <taxon>Thermoplasmata</taxon>
        <taxon>Thermoplasmatales</taxon>
        <taxon>Thermoplasmataceae</taxon>
        <taxon>Thermoplasma</taxon>
    </lineage>
</organism>